<sequence>MINNVVLIGRLTKDVELRYTPSQVACAQFTLAVNRNFKNQDGQKEADFINCVIWRKSAENLSNWAKKGQLIAITGRIQTRNYENQQGQRVYVTEVVAESFQILEKRDNTANTSSLADSMPDYGPEPDLPF</sequence>
<accession>Q8P2H3</accession>
<evidence type="ECO:0000255" key="1">
    <source>
        <dbReference type="HAMAP-Rule" id="MF_00984"/>
    </source>
</evidence>
<evidence type="ECO:0000256" key="2">
    <source>
        <dbReference type="SAM" id="MobiDB-lite"/>
    </source>
</evidence>
<gene>
    <name type="primary">ssb1</name>
    <name type="ordered locus">spyM18_0359</name>
</gene>
<proteinExistence type="inferred from homology"/>
<feature type="chain" id="PRO_0000096122" description="Single-stranded DNA-binding protein 1">
    <location>
        <begin position="1"/>
        <end position="130"/>
    </location>
</feature>
<feature type="domain" description="SSB" evidence="1">
    <location>
        <begin position="1"/>
        <end position="104"/>
    </location>
</feature>
<feature type="region of interest" description="Disordered" evidence="2">
    <location>
        <begin position="108"/>
        <end position="130"/>
    </location>
</feature>
<keyword id="KW-0238">DNA-binding</keyword>
<comment type="subunit">
    <text evidence="1">Homotetramer.</text>
</comment>
<dbReference type="EMBL" id="AE009949">
    <property type="protein sequence ID" value="AAL97110.1"/>
    <property type="molecule type" value="Genomic_DNA"/>
</dbReference>
<dbReference type="SMR" id="Q8P2H3"/>
<dbReference type="KEGG" id="spm:spyM18_0359"/>
<dbReference type="HOGENOM" id="CLU_078758_6_1_9"/>
<dbReference type="GO" id="GO:0009295">
    <property type="term" value="C:nucleoid"/>
    <property type="evidence" value="ECO:0007669"/>
    <property type="project" value="TreeGrafter"/>
</dbReference>
<dbReference type="GO" id="GO:0003697">
    <property type="term" value="F:single-stranded DNA binding"/>
    <property type="evidence" value="ECO:0007669"/>
    <property type="project" value="UniProtKB-UniRule"/>
</dbReference>
<dbReference type="GO" id="GO:0006260">
    <property type="term" value="P:DNA replication"/>
    <property type="evidence" value="ECO:0007669"/>
    <property type="project" value="InterPro"/>
</dbReference>
<dbReference type="CDD" id="cd04496">
    <property type="entry name" value="SSB_OBF"/>
    <property type="match status" value="1"/>
</dbReference>
<dbReference type="FunFam" id="2.40.50.140:FF:000084">
    <property type="entry name" value="Single-stranded DNA-binding protein"/>
    <property type="match status" value="1"/>
</dbReference>
<dbReference type="Gene3D" id="2.40.50.140">
    <property type="entry name" value="Nucleic acid-binding proteins"/>
    <property type="match status" value="1"/>
</dbReference>
<dbReference type="HAMAP" id="MF_00984">
    <property type="entry name" value="SSB"/>
    <property type="match status" value="1"/>
</dbReference>
<dbReference type="InterPro" id="IPR012340">
    <property type="entry name" value="NA-bd_OB-fold"/>
</dbReference>
<dbReference type="InterPro" id="IPR000424">
    <property type="entry name" value="Primosome_PriB/ssb"/>
</dbReference>
<dbReference type="InterPro" id="IPR011344">
    <property type="entry name" value="ssDNA-bd"/>
</dbReference>
<dbReference type="NCBIfam" id="TIGR00621">
    <property type="entry name" value="ssb"/>
    <property type="match status" value="1"/>
</dbReference>
<dbReference type="PANTHER" id="PTHR10302">
    <property type="entry name" value="SINGLE-STRANDED DNA-BINDING PROTEIN"/>
    <property type="match status" value="1"/>
</dbReference>
<dbReference type="PANTHER" id="PTHR10302:SF27">
    <property type="entry name" value="SINGLE-STRANDED DNA-BINDING PROTEIN"/>
    <property type="match status" value="1"/>
</dbReference>
<dbReference type="Pfam" id="PF00436">
    <property type="entry name" value="SSB"/>
    <property type="match status" value="1"/>
</dbReference>
<dbReference type="PIRSF" id="PIRSF002070">
    <property type="entry name" value="SSB"/>
    <property type="match status" value="1"/>
</dbReference>
<dbReference type="SUPFAM" id="SSF50249">
    <property type="entry name" value="Nucleic acid-binding proteins"/>
    <property type="match status" value="1"/>
</dbReference>
<dbReference type="PROSITE" id="PS50935">
    <property type="entry name" value="SSB"/>
    <property type="match status" value="1"/>
</dbReference>
<organism>
    <name type="scientific">Streptococcus pyogenes serotype M18 (strain MGAS8232)</name>
    <dbReference type="NCBI Taxonomy" id="186103"/>
    <lineage>
        <taxon>Bacteria</taxon>
        <taxon>Bacillati</taxon>
        <taxon>Bacillota</taxon>
        <taxon>Bacilli</taxon>
        <taxon>Lactobacillales</taxon>
        <taxon>Streptococcaceae</taxon>
        <taxon>Streptococcus</taxon>
    </lineage>
</organism>
<name>SSB1_STRP8</name>
<reference key="1">
    <citation type="journal article" date="2002" name="Proc. Natl. Acad. Sci. U.S.A.">
        <title>Genome sequence and comparative microarray analysis of serotype M18 group A Streptococcus strains associated with acute rheumatic fever outbreaks.</title>
        <authorList>
            <person name="Smoot J.C."/>
            <person name="Barbian K.D."/>
            <person name="Van Gompel J.J."/>
            <person name="Smoot L.M."/>
            <person name="Chaussee M.S."/>
            <person name="Sylva G.L."/>
            <person name="Sturdevant D.E."/>
            <person name="Ricklefs S.M."/>
            <person name="Porcella S.F."/>
            <person name="Parkins L.D."/>
            <person name="Beres S.B."/>
            <person name="Campbell D.S."/>
            <person name="Smith T.M."/>
            <person name="Zhang Q."/>
            <person name="Kapur V."/>
            <person name="Daly J.A."/>
            <person name="Veasy L.G."/>
            <person name="Musser J.M."/>
        </authorList>
    </citation>
    <scope>NUCLEOTIDE SEQUENCE [LARGE SCALE GENOMIC DNA]</scope>
    <source>
        <strain>MGAS8232</strain>
    </source>
</reference>
<protein>
    <recommendedName>
        <fullName evidence="1">Single-stranded DNA-binding protein 1</fullName>
        <shortName evidence="1">SSB 1</shortName>
    </recommendedName>
</protein>